<name>TMCAL_STAAC</name>
<reference key="1">
    <citation type="journal article" date="2005" name="J. Bacteriol.">
        <title>Insights on evolution of virulence and resistance from the complete genome analysis of an early methicillin-resistant Staphylococcus aureus strain and a biofilm-producing methicillin-resistant Staphylococcus epidermidis strain.</title>
        <authorList>
            <person name="Gill S.R."/>
            <person name="Fouts D.E."/>
            <person name="Archer G.L."/>
            <person name="Mongodin E.F."/>
            <person name="DeBoy R.T."/>
            <person name="Ravel J."/>
            <person name="Paulsen I.T."/>
            <person name="Kolonay J.F."/>
            <person name="Brinkac L.M."/>
            <person name="Beanan M.J."/>
            <person name="Dodson R.J."/>
            <person name="Daugherty S.C."/>
            <person name="Madupu R."/>
            <person name="Angiuoli S.V."/>
            <person name="Durkin A.S."/>
            <person name="Haft D.H."/>
            <person name="Vamathevan J.J."/>
            <person name="Khouri H."/>
            <person name="Utterback T.R."/>
            <person name="Lee C."/>
            <person name="Dimitrov G."/>
            <person name="Jiang L."/>
            <person name="Qin H."/>
            <person name="Weidman J."/>
            <person name="Tran K."/>
            <person name="Kang K.H."/>
            <person name="Hance I.R."/>
            <person name="Nelson K.E."/>
            <person name="Fraser C.M."/>
        </authorList>
    </citation>
    <scope>NUCLEOTIDE SEQUENCE [LARGE SCALE GENOMIC DNA]</scope>
    <source>
        <strain>COL</strain>
    </source>
</reference>
<dbReference type="EC" id="6.3.4.-" evidence="1"/>
<dbReference type="EMBL" id="CP000046">
    <property type="protein sequence ID" value="AAW38015.1"/>
    <property type="molecule type" value="Genomic_DNA"/>
</dbReference>
<dbReference type="RefSeq" id="WP_000843611.1">
    <property type="nucleotide sequence ID" value="NZ_JBGOFO010000002.1"/>
</dbReference>
<dbReference type="SMR" id="Q5HGV8"/>
<dbReference type="KEGG" id="sac:SACOL1135"/>
<dbReference type="HOGENOM" id="CLU_038915_0_2_9"/>
<dbReference type="Proteomes" id="UP000000530">
    <property type="component" value="Chromosome"/>
</dbReference>
<dbReference type="GO" id="GO:0005737">
    <property type="term" value="C:cytoplasm"/>
    <property type="evidence" value="ECO:0007669"/>
    <property type="project" value="UniProtKB-SubCell"/>
</dbReference>
<dbReference type="GO" id="GO:0005524">
    <property type="term" value="F:ATP binding"/>
    <property type="evidence" value="ECO:0007669"/>
    <property type="project" value="UniProtKB-KW"/>
</dbReference>
<dbReference type="GO" id="GO:0016879">
    <property type="term" value="F:ligase activity, forming carbon-nitrogen bonds"/>
    <property type="evidence" value="ECO:0007669"/>
    <property type="project" value="UniProtKB-UniRule"/>
</dbReference>
<dbReference type="GO" id="GO:0000049">
    <property type="term" value="F:tRNA binding"/>
    <property type="evidence" value="ECO:0007669"/>
    <property type="project" value="UniProtKB-KW"/>
</dbReference>
<dbReference type="GO" id="GO:0006400">
    <property type="term" value="P:tRNA modification"/>
    <property type="evidence" value="ECO:0007669"/>
    <property type="project" value="UniProtKB-UniRule"/>
</dbReference>
<dbReference type="Gene3D" id="3.40.50.620">
    <property type="entry name" value="HUPs"/>
    <property type="match status" value="1"/>
</dbReference>
<dbReference type="HAMAP" id="MF_01539">
    <property type="entry name" value="TmcAL"/>
    <property type="match status" value="1"/>
</dbReference>
<dbReference type="InterPro" id="IPR014729">
    <property type="entry name" value="Rossmann-like_a/b/a_fold"/>
</dbReference>
<dbReference type="InterPro" id="IPR008513">
    <property type="entry name" value="tRNA(Met)_cyd_acetate_ligase"/>
</dbReference>
<dbReference type="NCBIfam" id="NF010191">
    <property type="entry name" value="PRK13670.1"/>
    <property type="match status" value="1"/>
</dbReference>
<dbReference type="PANTHER" id="PTHR37825">
    <property type="entry name" value="TRNA(MET) CYTIDINE ACETATE LIGASE"/>
    <property type="match status" value="1"/>
</dbReference>
<dbReference type="PANTHER" id="PTHR37825:SF1">
    <property type="entry name" value="TRNA(MET) CYTIDINE ACETATE LIGASE"/>
    <property type="match status" value="1"/>
</dbReference>
<dbReference type="Pfam" id="PF05636">
    <property type="entry name" value="HIGH_NTase1"/>
    <property type="match status" value="1"/>
</dbReference>
<dbReference type="SUPFAM" id="SSF52374">
    <property type="entry name" value="Nucleotidylyl transferase"/>
    <property type="match status" value="1"/>
</dbReference>
<organism>
    <name type="scientific">Staphylococcus aureus (strain COL)</name>
    <dbReference type="NCBI Taxonomy" id="93062"/>
    <lineage>
        <taxon>Bacteria</taxon>
        <taxon>Bacillati</taxon>
        <taxon>Bacillota</taxon>
        <taxon>Bacilli</taxon>
        <taxon>Bacillales</taxon>
        <taxon>Staphylococcaceae</taxon>
        <taxon>Staphylococcus</taxon>
    </lineage>
</organism>
<evidence type="ECO:0000255" key="1">
    <source>
        <dbReference type="HAMAP-Rule" id="MF_01539"/>
    </source>
</evidence>
<sequence length="379" mass="43240">MKSVGLITEYNPFHNGHQYHINQSKKLTNADVTIAIMSGNFVMRGEPAIYNKFTRAKMALSTADLVIELPATASLSSGDHFAELAVKVADYMSVDTIAFGSENNDIKTLKQLAHSINEIEQSESFSQKVKEGKSYPRIISELLEHHEALASPNNILGISYLKAIAKNAKNINAISIKRENAQHHDSLIQHHQFASGTSIRTSIISQDDHWHHVVPKDIQHLYVTPHITLNQIFPYLKYQIIAMTTDSLKNIYTVTEGFENRLKSNIYEATDFHHFVKLLKTKRYTYTHIQRLLMNVLLNIKPTDVTSNIHAVKVLAMNDRGRQYLKHLKTAFPERQYITNINKSNAHYFTNEIKATHIYNAISGQQQTDFNTPVIQQYR</sequence>
<keyword id="KW-0067">ATP-binding</keyword>
<keyword id="KW-0963">Cytoplasm</keyword>
<keyword id="KW-0436">Ligase</keyword>
<keyword id="KW-0547">Nucleotide-binding</keyword>
<keyword id="KW-0694">RNA-binding</keyword>
<keyword id="KW-0819">tRNA processing</keyword>
<keyword id="KW-0820">tRNA-binding</keyword>
<protein>
    <recommendedName>
        <fullName evidence="1">tRNA(Met) cytidine acetate ligase</fullName>
        <ecNumber evidence="1">6.3.4.-</ecNumber>
    </recommendedName>
</protein>
<accession>Q5HGV8</accession>
<comment type="function">
    <text evidence="1">Catalyzes the formation of N(4)-acetylcytidine (ac(4)C) at the wobble position of elongator tRNA(Met), using acetate and ATP as substrates. First activates an acetate ion to form acetyladenylate (Ac-AMP) and then transfers the acetyl group to tRNA to form ac(4)C34.</text>
</comment>
<comment type="catalytic activity">
    <reaction evidence="1">
        <text>cytidine(34) in elongator tRNA(Met) + acetate + ATP = N(4)-acetylcytidine(34) in elongator tRNA(Met) + AMP + diphosphate</text>
        <dbReference type="Rhea" id="RHEA:58144"/>
        <dbReference type="Rhea" id="RHEA-COMP:10693"/>
        <dbReference type="Rhea" id="RHEA-COMP:10694"/>
        <dbReference type="ChEBI" id="CHEBI:30089"/>
        <dbReference type="ChEBI" id="CHEBI:30616"/>
        <dbReference type="ChEBI" id="CHEBI:33019"/>
        <dbReference type="ChEBI" id="CHEBI:74900"/>
        <dbReference type="ChEBI" id="CHEBI:82748"/>
        <dbReference type="ChEBI" id="CHEBI:456215"/>
    </reaction>
</comment>
<comment type="subcellular location">
    <subcellularLocation>
        <location evidence="1">Cytoplasm</location>
    </subcellularLocation>
</comment>
<comment type="similarity">
    <text evidence="1">Belongs to the TmcAL family.</text>
</comment>
<gene>
    <name evidence="1" type="primary">tmcAL</name>
    <name type="ordered locus">SACOL1135</name>
</gene>
<feature type="chain" id="PRO_0000147178" description="tRNA(Met) cytidine acetate ligase">
    <location>
        <begin position="1"/>
        <end position="379"/>
    </location>
</feature>
<feature type="binding site" evidence="1">
    <location>
        <begin position="7"/>
        <end position="20"/>
    </location>
    <ligand>
        <name>ATP</name>
        <dbReference type="ChEBI" id="CHEBI:30616"/>
    </ligand>
</feature>
<feature type="binding site" evidence="1">
    <location>
        <position position="100"/>
    </location>
    <ligand>
        <name>ATP</name>
        <dbReference type="ChEBI" id="CHEBI:30616"/>
    </ligand>
</feature>
<feature type="binding site" evidence="1">
    <location>
        <position position="153"/>
    </location>
    <ligand>
        <name>ATP</name>
        <dbReference type="ChEBI" id="CHEBI:30616"/>
    </ligand>
</feature>
<feature type="binding site" evidence="1">
    <location>
        <position position="178"/>
    </location>
    <ligand>
        <name>ATP</name>
        <dbReference type="ChEBI" id="CHEBI:30616"/>
    </ligand>
</feature>
<proteinExistence type="inferred from homology"/>